<keyword id="KW-0963">Cytoplasm</keyword>
<keyword id="KW-0342">GTP-binding</keyword>
<keyword id="KW-0396">Initiation factor</keyword>
<keyword id="KW-0547">Nucleotide-binding</keyword>
<keyword id="KW-0648">Protein biosynthesis</keyword>
<keyword id="KW-1185">Reference proteome</keyword>
<dbReference type="EMBL" id="AE017285">
    <property type="protein sequence ID" value="AAS94990.1"/>
    <property type="molecule type" value="Genomic_DNA"/>
</dbReference>
<dbReference type="RefSeq" id="WP_010937814.1">
    <property type="nucleotide sequence ID" value="NC_002937.3"/>
</dbReference>
<dbReference type="RefSeq" id="YP_009731.1">
    <property type="nucleotide sequence ID" value="NC_002937.3"/>
</dbReference>
<dbReference type="SMR" id="Q72ER1"/>
<dbReference type="STRING" id="882.DVU_0508"/>
<dbReference type="PaxDb" id="882-DVU_0508"/>
<dbReference type="EnsemblBacteria" id="AAS94990">
    <property type="protein sequence ID" value="AAS94990"/>
    <property type="gene ID" value="DVU_0508"/>
</dbReference>
<dbReference type="KEGG" id="dvu:DVU_0508"/>
<dbReference type="PATRIC" id="fig|882.5.peg.485"/>
<dbReference type="eggNOG" id="COG0532">
    <property type="taxonomic scope" value="Bacteria"/>
</dbReference>
<dbReference type="eggNOG" id="COG3266">
    <property type="taxonomic scope" value="Bacteria"/>
</dbReference>
<dbReference type="HOGENOM" id="CLU_006301_9_3_7"/>
<dbReference type="OrthoDB" id="9811804at2"/>
<dbReference type="PhylomeDB" id="Q72ER1"/>
<dbReference type="Proteomes" id="UP000002194">
    <property type="component" value="Chromosome"/>
</dbReference>
<dbReference type="GO" id="GO:0005829">
    <property type="term" value="C:cytosol"/>
    <property type="evidence" value="ECO:0007669"/>
    <property type="project" value="TreeGrafter"/>
</dbReference>
<dbReference type="GO" id="GO:0005525">
    <property type="term" value="F:GTP binding"/>
    <property type="evidence" value="ECO:0007669"/>
    <property type="project" value="UniProtKB-KW"/>
</dbReference>
<dbReference type="GO" id="GO:0003924">
    <property type="term" value="F:GTPase activity"/>
    <property type="evidence" value="ECO:0007669"/>
    <property type="project" value="UniProtKB-UniRule"/>
</dbReference>
<dbReference type="GO" id="GO:0003743">
    <property type="term" value="F:translation initiation factor activity"/>
    <property type="evidence" value="ECO:0007669"/>
    <property type="project" value="UniProtKB-UniRule"/>
</dbReference>
<dbReference type="CDD" id="cd01887">
    <property type="entry name" value="IF2_eIF5B"/>
    <property type="match status" value="1"/>
</dbReference>
<dbReference type="CDD" id="cd03702">
    <property type="entry name" value="IF2_mtIF2_II"/>
    <property type="match status" value="1"/>
</dbReference>
<dbReference type="CDD" id="cd03692">
    <property type="entry name" value="mtIF2_IVc"/>
    <property type="match status" value="1"/>
</dbReference>
<dbReference type="FunFam" id="2.40.30.10:FF:000007">
    <property type="entry name" value="Translation initiation factor IF-2"/>
    <property type="match status" value="1"/>
</dbReference>
<dbReference type="FunFam" id="2.40.30.10:FF:000008">
    <property type="entry name" value="Translation initiation factor IF-2"/>
    <property type="match status" value="1"/>
</dbReference>
<dbReference type="FunFam" id="3.40.50.10050:FF:000001">
    <property type="entry name" value="Translation initiation factor IF-2"/>
    <property type="match status" value="1"/>
</dbReference>
<dbReference type="FunFam" id="3.40.50.300:FF:000019">
    <property type="entry name" value="Translation initiation factor IF-2"/>
    <property type="match status" value="1"/>
</dbReference>
<dbReference type="Gene3D" id="1.10.10.2480">
    <property type="match status" value="1"/>
</dbReference>
<dbReference type="Gene3D" id="3.40.50.300">
    <property type="entry name" value="P-loop containing nucleotide triphosphate hydrolases"/>
    <property type="match status" value="1"/>
</dbReference>
<dbReference type="Gene3D" id="2.40.30.10">
    <property type="entry name" value="Translation factors"/>
    <property type="match status" value="2"/>
</dbReference>
<dbReference type="Gene3D" id="3.40.50.10050">
    <property type="entry name" value="Translation initiation factor IF- 2, domain 3"/>
    <property type="match status" value="1"/>
</dbReference>
<dbReference type="HAMAP" id="MF_00100_B">
    <property type="entry name" value="IF_2_B"/>
    <property type="match status" value="1"/>
</dbReference>
<dbReference type="InterPro" id="IPR053905">
    <property type="entry name" value="EF-G-like_DII"/>
</dbReference>
<dbReference type="InterPro" id="IPR004161">
    <property type="entry name" value="EFTu-like_2"/>
</dbReference>
<dbReference type="InterPro" id="IPR044145">
    <property type="entry name" value="IF2_II"/>
</dbReference>
<dbReference type="InterPro" id="IPR006847">
    <property type="entry name" value="IF2_N"/>
</dbReference>
<dbReference type="InterPro" id="IPR027417">
    <property type="entry name" value="P-loop_NTPase"/>
</dbReference>
<dbReference type="InterPro" id="IPR005225">
    <property type="entry name" value="Small_GTP-bd"/>
</dbReference>
<dbReference type="InterPro" id="IPR000795">
    <property type="entry name" value="T_Tr_GTP-bd_dom"/>
</dbReference>
<dbReference type="InterPro" id="IPR000178">
    <property type="entry name" value="TF_IF2_bacterial-like"/>
</dbReference>
<dbReference type="InterPro" id="IPR015760">
    <property type="entry name" value="TIF_IF2"/>
</dbReference>
<dbReference type="InterPro" id="IPR023115">
    <property type="entry name" value="TIF_IF2_dom3"/>
</dbReference>
<dbReference type="InterPro" id="IPR036925">
    <property type="entry name" value="TIF_IF2_dom3_sf"/>
</dbReference>
<dbReference type="InterPro" id="IPR009000">
    <property type="entry name" value="Transl_B-barrel_sf"/>
</dbReference>
<dbReference type="NCBIfam" id="TIGR00487">
    <property type="entry name" value="IF-2"/>
    <property type="match status" value="1"/>
</dbReference>
<dbReference type="NCBIfam" id="TIGR00231">
    <property type="entry name" value="small_GTP"/>
    <property type="match status" value="1"/>
</dbReference>
<dbReference type="PANTHER" id="PTHR43381:SF5">
    <property type="entry name" value="TR-TYPE G DOMAIN-CONTAINING PROTEIN"/>
    <property type="match status" value="1"/>
</dbReference>
<dbReference type="PANTHER" id="PTHR43381">
    <property type="entry name" value="TRANSLATION INITIATION FACTOR IF-2-RELATED"/>
    <property type="match status" value="1"/>
</dbReference>
<dbReference type="Pfam" id="PF22042">
    <property type="entry name" value="EF-G_D2"/>
    <property type="match status" value="1"/>
</dbReference>
<dbReference type="Pfam" id="PF00009">
    <property type="entry name" value="GTP_EFTU"/>
    <property type="match status" value="1"/>
</dbReference>
<dbReference type="Pfam" id="PF03144">
    <property type="entry name" value="GTP_EFTU_D2"/>
    <property type="match status" value="1"/>
</dbReference>
<dbReference type="Pfam" id="PF11987">
    <property type="entry name" value="IF-2"/>
    <property type="match status" value="1"/>
</dbReference>
<dbReference type="Pfam" id="PF04760">
    <property type="entry name" value="IF2_N"/>
    <property type="match status" value="1"/>
</dbReference>
<dbReference type="SUPFAM" id="SSF52156">
    <property type="entry name" value="Initiation factor IF2/eIF5b, domain 3"/>
    <property type="match status" value="1"/>
</dbReference>
<dbReference type="SUPFAM" id="SSF52540">
    <property type="entry name" value="P-loop containing nucleoside triphosphate hydrolases"/>
    <property type="match status" value="1"/>
</dbReference>
<dbReference type="SUPFAM" id="SSF50447">
    <property type="entry name" value="Translation proteins"/>
    <property type="match status" value="2"/>
</dbReference>
<dbReference type="PROSITE" id="PS51722">
    <property type="entry name" value="G_TR_2"/>
    <property type="match status" value="1"/>
</dbReference>
<dbReference type="PROSITE" id="PS01176">
    <property type="entry name" value="IF2"/>
    <property type="match status" value="1"/>
</dbReference>
<proteinExistence type="inferred from homology"/>
<accession>Q72ER1</accession>
<gene>
    <name evidence="2" type="primary">infB</name>
    <name type="ordered locus">DVU_0508</name>
</gene>
<sequence length="1079" mass="115406">MTENKTKVKDLAAELGVTTKELGQVLKDMNISAKTSTSVIAQEDLPRIKERVQAQRDGGARKEGNPDVIVRRRHRDGDRASARAEAKAPEQEATAAMPETSAPERAEEADKPAVAKPAKAPETEAHARARKEPQAEPVKARIIRRPDEPAPVAKVVEAAPAETPAPEAPAVKATVTAEAAPAKTVEPESERPQADKPATARVVRPATPDASAVPDGTSSAPTLPVRSAEPSDTVERADADADGDDDDAQQRRRKKKRRQPEAVVPQVRVISRPDPAAVAQQQMQQQAAQQQREAGGYRPGGQRPEGGYRPEGQREGGYRPEGQREGGYRPGGAPRPEGGYRPGGPRPEGGYRPGAPRPEGGYRPAGGPRPEGQREGGYRPGAPRPEGGYRPAGGAPRPEGQREGGYRPAGGPPRPGGAPRPGGFGGAPGGMPVPGADGRGDQSKKKRQKGRRTVDFQADGPRGRSDDDVMRGPRGRGKRGKKDVRPAATQPLKAVKRKIKVDEAIRVADMAHQMGLKANEIIKVLFGLGVMATINQSLDIDTATVVAGEFGYEVEKVGFSEDDYLVPKEEDAPETLVTRPPVVTIMGHVDHGKTSLLDAIRKSNVTAGEAGGITQHIGAYHVTTKKGEIVFLDTPGHEAFTAMRARGAQITDLVVLVVAADDGVMEQTREAVNHSKAAGVPIMVAVNKMDKEGANPDRVIRELSELGLVAEDWGGDTIFAKVSAKTREGLDELLELIAIQAEILELKANPDKAARGHVVEAKLDKGRGPLATVLVQEGTLRQGDAFVCGVFAGRVRAMFDDQGRKVKEAGPSTPVEVQGFDGVVEAGEEFVSVADDKVARRIAESRAVKQRERELAKESKVTLETFLSRRADAAEALTLNLVLKADVQGTLEAISEAVRKLSTEKVKINIIHGGAGAITESDILLASASDAIIIGFNVRPTSKVKDIAEQENVDIRFYDIIYKLVDEIKSAMAGMLAPVQREVYLGQAEVRETFSVPKIGVIAGCHVADGKVTRNAGVRLLRDGVVVYTGKITSLKRFKDDVRDVQKGYECGMGLENFNDIKVGDVIEAFEMVEEAATL</sequence>
<comment type="function">
    <text evidence="2">One of the essential components for the initiation of protein synthesis. Protects formylmethionyl-tRNA from spontaneous hydrolysis and promotes its binding to the 30S ribosomal subunits. Also involved in the hydrolysis of GTP during the formation of the 70S ribosomal complex.</text>
</comment>
<comment type="subcellular location">
    <subcellularLocation>
        <location evidence="2">Cytoplasm</location>
    </subcellularLocation>
</comment>
<comment type="similarity">
    <text evidence="2">Belongs to the TRAFAC class translation factor GTPase superfamily. Classic translation factor GTPase family. IF-2 subfamily.</text>
</comment>
<feature type="chain" id="PRO_0000228193" description="Translation initiation factor IF-2">
    <location>
        <begin position="1"/>
        <end position="1079"/>
    </location>
</feature>
<feature type="domain" description="tr-type G">
    <location>
        <begin position="578"/>
        <end position="745"/>
    </location>
</feature>
<feature type="region of interest" description="Disordered" evidence="3">
    <location>
        <begin position="52"/>
        <end position="488"/>
    </location>
</feature>
<feature type="region of interest" description="G1" evidence="1">
    <location>
        <begin position="587"/>
        <end position="594"/>
    </location>
</feature>
<feature type="region of interest" description="G2" evidence="1">
    <location>
        <begin position="612"/>
        <end position="616"/>
    </location>
</feature>
<feature type="region of interest" description="G3" evidence="1">
    <location>
        <begin position="633"/>
        <end position="636"/>
    </location>
</feature>
<feature type="region of interest" description="G4" evidence="1">
    <location>
        <begin position="687"/>
        <end position="690"/>
    </location>
</feature>
<feature type="region of interest" description="G5" evidence="1">
    <location>
        <begin position="723"/>
        <end position="725"/>
    </location>
</feature>
<feature type="compositionally biased region" description="Basic and acidic residues" evidence="3">
    <location>
        <begin position="52"/>
        <end position="65"/>
    </location>
</feature>
<feature type="compositionally biased region" description="Basic and acidic residues" evidence="3">
    <location>
        <begin position="75"/>
        <end position="90"/>
    </location>
</feature>
<feature type="compositionally biased region" description="Basic and acidic residues" evidence="3">
    <location>
        <begin position="102"/>
        <end position="134"/>
    </location>
</feature>
<feature type="compositionally biased region" description="Low complexity" evidence="3">
    <location>
        <begin position="150"/>
        <end position="184"/>
    </location>
</feature>
<feature type="compositionally biased region" description="Basic and acidic residues" evidence="3">
    <location>
        <begin position="185"/>
        <end position="194"/>
    </location>
</feature>
<feature type="compositionally biased region" description="Low complexity" evidence="3">
    <location>
        <begin position="276"/>
        <end position="291"/>
    </location>
</feature>
<feature type="compositionally biased region" description="Basic and acidic residues" evidence="3">
    <location>
        <begin position="306"/>
        <end position="327"/>
    </location>
</feature>
<feature type="compositionally biased region" description="Low complexity" evidence="3">
    <location>
        <begin position="348"/>
        <end position="370"/>
    </location>
</feature>
<feature type="compositionally biased region" description="Low complexity" evidence="3">
    <location>
        <begin position="380"/>
        <end position="398"/>
    </location>
</feature>
<feature type="compositionally biased region" description="Gly residues" evidence="3">
    <location>
        <begin position="419"/>
        <end position="429"/>
    </location>
</feature>
<feature type="compositionally biased region" description="Basic and acidic residues" evidence="3">
    <location>
        <begin position="461"/>
        <end position="471"/>
    </location>
</feature>
<feature type="compositionally biased region" description="Basic residues" evidence="3">
    <location>
        <begin position="473"/>
        <end position="482"/>
    </location>
</feature>
<feature type="binding site" evidence="2">
    <location>
        <begin position="587"/>
        <end position="594"/>
    </location>
    <ligand>
        <name>GTP</name>
        <dbReference type="ChEBI" id="CHEBI:37565"/>
    </ligand>
</feature>
<feature type="binding site" evidence="2">
    <location>
        <begin position="633"/>
        <end position="637"/>
    </location>
    <ligand>
        <name>GTP</name>
        <dbReference type="ChEBI" id="CHEBI:37565"/>
    </ligand>
</feature>
<feature type="binding site" evidence="2">
    <location>
        <begin position="687"/>
        <end position="690"/>
    </location>
    <ligand>
        <name>GTP</name>
        <dbReference type="ChEBI" id="CHEBI:37565"/>
    </ligand>
</feature>
<name>IF2_NITV2</name>
<evidence type="ECO:0000250" key="1"/>
<evidence type="ECO:0000255" key="2">
    <source>
        <dbReference type="HAMAP-Rule" id="MF_00100"/>
    </source>
</evidence>
<evidence type="ECO:0000256" key="3">
    <source>
        <dbReference type="SAM" id="MobiDB-lite"/>
    </source>
</evidence>
<organism>
    <name type="scientific">Nitratidesulfovibrio vulgaris (strain ATCC 29579 / DSM 644 / CCUG 34227 / NCIMB 8303 / VKM B-1760 / Hildenborough)</name>
    <name type="common">Desulfovibrio vulgaris</name>
    <dbReference type="NCBI Taxonomy" id="882"/>
    <lineage>
        <taxon>Bacteria</taxon>
        <taxon>Pseudomonadati</taxon>
        <taxon>Thermodesulfobacteriota</taxon>
        <taxon>Desulfovibrionia</taxon>
        <taxon>Desulfovibrionales</taxon>
        <taxon>Desulfovibrionaceae</taxon>
        <taxon>Nitratidesulfovibrio</taxon>
    </lineage>
</organism>
<reference key="1">
    <citation type="journal article" date="2004" name="Nat. Biotechnol.">
        <title>The genome sequence of the anaerobic, sulfate-reducing bacterium Desulfovibrio vulgaris Hildenborough.</title>
        <authorList>
            <person name="Heidelberg J.F."/>
            <person name="Seshadri R."/>
            <person name="Haveman S.A."/>
            <person name="Hemme C.L."/>
            <person name="Paulsen I.T."/>
            <person name="Kolonay J.F."/>
            <person name="Eisen J.A."/>
            <person name="Ward N.L."/>
            <person name="Methe B.A."/>
            <person name="Brinkac L.M."/>
            <person name="Daugherty S.C."/>
            <person name="DeBoy R.T."/>
            <person name="Dodson R.J."/>
            <person name="Durkin A.S."/>
            <person name="Madupu R."/>
            <person name="Nelson W.C."/>
            <person name="Sullivan S.A."/>
            <person name="Fouts D.E."/>
            <person name="Haft D.H."/>
            <person name="Selengut J."/>
            <person name="Peterson J.D."/>
            <person name="Davidsen T.M."/>
            <person name="Zafar N."/>
            <person name="Zhou L."/>
            <person name="Radune D."/>
            <person name="Dimitrov G."/>
            <person name="Hance M."/>
            <person name="Tran K."/>
            <person name="Khouri H.M."/>
            <person name="Gill J."/>
            <person name="Utterback T.R."/>
            <person name="Feldblyum T.V."/>
            <person name="Wall J.D."/>
            <person name="Voordouw G."/>
            <person name="Fraser C.M."/>
        </authorList>
    </citation>
    <scope>NUCLEOTIDE SEQUENCE [LARGE SCALE GENOMIC DNA]</scope>
    <source>
        <strain>ATCC 29579 / DSM 644 / CCUG 34227 / NCIMB 8303 / VKM B-1760 / Hildenborough</strain>
    </source>
</reference>
<protein>
    <recommendedName>
        <fullName evidence="2">Translation initiation factor IF-2</fullName>
    </recommendedName>
</protein>